<feature type="chain" id="PRO_0000375066" description="Ribosomal protein uS12 methylthiotransferase RimO">
    <location>
        <begin position="1"/>
        <end position="469"/>
    </location>
</feature>
<feature type="domain" description="MTTase N-terminal" evidence="1">
    <location>
        <begin position="34"/>
        <end position="144"/>
    </location>
</feature>
<feature type="domain" description="Radical SAM core" evidence="2">
    <location>
        <begin position="162"/>
        <end position="399"/>
    </location>
</feature>
<feature type="domain" description="TRAM" evidence="1">
    <location>
        <begin position="402"/>
        <end position="468"/>
    </location>
</feature>
<feature type="binding site" evidence="1">
    <location>
        <position position="43"/>
    </location>
    <ligand>
        <name>[4Fe-4S] cluster</name>
        <dbReference type="ChEBI" id="CHEBI:49883"/>
        <label>1</label>
    </ligand>
</feature>
<feature type="binding site" evidence="1">
    <location>
        <position position="79"/>
    </location>
    <ligand>
        <name>[4Fe-4S] cluster</name>
        <dbReference type="ChEBI" id="CHEBI:49883"/>
        <label>1</label>
    </ligand>
</feature>
<feature type="binding site" evidence="1">
    <location>
        <position position="108"/>
    </location>
    <ligand>
        <name>[4Fe-4S] cluster</name>
        <dbReference type="ChEBI" id="CHEBI:49883"/>
        <label>1</label>
    </ligand>
</feature>
<feature type="binding site" evidence="1">
    <location>
        <position position="176"/>
    </location>
    <ligand>
        <name>[4Fe-4S] cluster</name>
        <dbReference type="ChEBI" id="CHEBI:49883"/>
        <label>2</label>
        <note>4Fe-4S-S-AdoMet</note>
    </ligand>
</feature>
<feature type="binding site" evidence="1">
    <location>
        <position position="180"/>
    </location>
    <ligand>
        <name>[4Fe-4S] cluster</name>
        <dbReference type="ChEBI" id="CHEBI:49883"/>
        <label>2</label>
        <note>4Fe-4S-S-AdoMet</note>
    </ligand>
</feature>
<feature type="binding site" evidence="1">
    <location>
        <position position="183"/>
    </location>
    <ligand>
        <name>[4Fe-4S] cluster</name>
        <dbReference type="ChEBI" id="CHEBI:49883"/>
        <label>2</label>
        <note>4Fe-4S-S-AdoMet</note>
    </ligand>
</feature>
<reference key="1">
    <citation type="journal article" date="2003" name="Genome Res.">
        <title>Comparative genome analysis of Vibrio vulnificus, a marine pathogen.</title>
        <authorList>
            <person name="Chen C.-Y."/>
            <person name="Wu K.-M."/>
            <person name="Chang Y.-C."/>
            <person name="Chang C.-H."/>
            <person name="Tsai H.-C."/>
            <person name="Liao T.-L."/>
            <person name="Liu Y.-M."/>
            <person name="Chen H.-J."/>
            <person name="Shen A.B.-T."/>
            <person name="Li J.-C."/>
            <person name="Su T.-L."/>
            <person name="Shao C.-P."/>
            <person name="Lee C.-T."/>
            <person name="Hor L.-I."/>
            <person name="Tsai S.-F."/>
        </authorList>
    </citation>
    <scope>NUCLEOTIDE SEQUENCE [LARGE SCALE GENOMIC DNA]</scope>
    <source>
        <strain>YJ016</strain>
    </source>
</reference>
<gene>
    <name evidence="1" type="primary">rimO</name>
    <name type="ordered locus">VVA0081</name>
</gene>
<evidence type="ECO:0000255" key="1">
    <source>
        <dbReference type="HAMAP-Rule" id="MF_01865"/>
    </source>
</evidence>
<evidence type="ECO:0000255" key="2">
    <source>
        <dbReference type="PROSITE-ProRule" id="PRU01266"/>
    </source>
</evidence>
<name>RIMO_VIBVY</name>
<organism>
    <name type="scientific">Vibrio vulnificus (strain YJ016)</name>
    <dbReference type="NCBI Taxonomy" id="196600"/>
    <lineage>
        <taxon>Bacteria</taxon>
        <taxon>Pseudomonadati</taxon>
        <taxon>Pseudomonadota</taxon>
        <taxon>Gammaproteobacteria</taxon>
        <taxon>Vibrionales</taxon>
        <taxon>Vibrionaceae</taxon>
        <taxon>Vibrio</taxon>
    </lineage>
</organism>
<proteinExistence type="inferred from homology"/>
<protein>
    <recommendedName>
        <fullName evidence="1">Ribosomal protein uS12 methylthiotransferase RimO</fullName>
        <shortName evidence="1">uS12 MTTase</shortName>
        <shortName evidence="1">uS12 methylthiotransferase</shortName>
        <ecNumber evidence="1">2.8.4.4</ecNumber>
    </recommendedName>
    <alternativeName>
        <fullName evidence="1">Ribosomal protein uS12 (aspartate-C(3))-methylthiotransferase</fullName>
    </alternativeName>
    <alternativeName>
        <fullName evidence="1">Ribosome maturation factor RimO</fullName>
    </alternativeName>
</protein>
<accession>Q7MG88</accession>
<keyword id="KW-0004">4Fe-4S</keyword>
<keyword id="KW-0963">Cytoplasm</keyword>
<keyword id="KW-0408">Iron</keyword>
<keyword id="KW-0411">Iron-sulfur</keyword>
<keyword id="KW-0479">Metal-binding</keyword>
<keyword id="KW-0949">S-adenosyl-L-methionine</keyword>
<keyword id="KW-0808">Transferase</keyword>
<sequence>MTVQTFTPNQTTTLDTAKKTIEQQSQELTPSGGNKIGFVSLGCPKNLVDSERILTQLRTEGYEIVNSYHDSDVVIVNTCGFIDSAVQESLDTIGEALKENGKVIVTGCLGAREDEIREVHPGVLGITGPHAYENVLEHVHQFAPKPEHNPFTSLVPDHGVKLTPKHYAYLKISEGCNHRCTFCIIPSMRGDLVSRPVGEILSEAERLKNAGVKELLVISQDTSAYGVDSKHSLGFANGSPVRQNIKALSEELGKMGIWVRLHYVYPYPHVDDLIPLMAEGKILPYLDIPFQHASPNVLKAMKRPGRAERTLDQIKKWREICPELVIRSTFIVGFPGETDEDFEMLLEWLKEAQLDRVGCFKYSPVEGAAANDIDDQISEEVKQERFERFMLVQQEISAAKLQKRIGSTMKVIIDEVDEEGAIGRTYADAPEIDGLVYLNGETSLKAGELVDVLIEHADEYDLWGSLVRA</sequence>
<comment type="function">
    <text evidence="1">Catalyzes the methylthiolation of an aspartic acid residue of ribosomal protein uS12.</text>
</comment>
<comment type="catalytic activity">
    <reaction evidence="1">
        <text>L-aspartate(89)-[ribosomal protein uS12]-hydrogen + (sulfur carrier)-SH + AH2 + 2 S-adenosyl-L-methionine = 3-methylsulfanyl-L-aspartate(89)-[ribosomal protein uS12]-hydrogen + (sulfur carrier)-H + 5'-deoxyadenosine + L-methionine + A + S-adenosyl-L-homocysteine + 2 H(+)</text>
        <dbReference type="Rhea" id="RHEA:37087"/>
        <dbReference type="Rhea" id="RHEA-COMP:10460"/>
        <dbReference type="Rhea" id="RHEA-COMP:10461"/>
        <dbReference type="Rhea" id="RHEA-COMP:14737"/>
        <dbReference type="Rhea" id="RHEA-COMP:14739"/>
        <dbReference type="ChEBI" id="CHEBI:13193"/>
        <dbReference type="ChEBI" id="CHEBI:15378"/>
        <dbReference type="ChEBI" id="CHEBI:17319"/>
        <dbReference type="ChEBI" id="CHEBI:17499"/>
        <dbReference type="ChEBI" id="CHEBI:29917"/>
        <dbReference type="ChEBI" id="CHEBI:29961"/>
        <dbReference type="ChEBI" id="CHEBI:57844"/>
        <dbReference type="ChEBI" id="CHEBI:57856"/>
        <dbReference type="ChEBI" id="CHEBI:59789"/>
        <dbReference type="ChEBI" id="CHEBI:64428"/>
        <dbReference type="ChEBI" id="CHEBI:73599"/>
        <dbReference type="EC" id="2.8.4.4"/>
    </reaction>
</comment>
<comment type="cofactor">
    <cofactor evidence="1">
        <name>[4Fe-4S] cluster</name>
        <dbReference type="ChEBI" id="CHEBI:49883"/>
    </cofactor>
    <text evidence="1">Binds 2 [4Fe-4S] clusters. One cluster is coordinated with 3 cysteines and an exchangeable S-adenosyl-L-methionine.</text>
</comment>
<comment type="subcellular location">
    <subcellularLocation>
        <location evidence="1">Cytoplasm</location>
    </subcellularLocation>
</comment>
<comment type="similarity">
    <text evidence="1">Belongs to the methylthiotransferase family. RimO subfamily.</text>
</comment>
<dbReference type="EC" id="2.8.4.4" evidence="1"/>
<dbReference type="EMBL" id="BA000038">
    <property type="protein sequence ID" value="BAC96107.1"/>
    <property type="molecule type" value="Genomic_DNA"/>
</dbReference>
<dbReference type="RefSeq" id="WP_011151511.1">
    <property type="nucleotide sequence ID" value="NC_005140.1"/>
</dbReference>
<dbReference type="SMR" id="Q7MG88"/>
<dbReference type="STRING" id="672.VV93_v1c30920"/>
<dbReference type="KEGG" id="vvy:VVA0081"/>
<dbReference type="eggNOG" id="COG0621">
    <property type="taxonomic scope" value="Bacteria"/>
</dbReference>
<dbReference type="HOGENOM" id="CLU_018697_0_0_6"/>
<dbReference type="Proteomes" id="UP000002675">
    <property type="component" value="Chromosome II"/>
</dbReference>
<dbReference type="GO" id="GO:0005829">
    <property type="term" value="C:cytosol"/>
    <property type="evidence" value="ECO:0007669"/>
    <property type="project" value="TreeGrafter"/>
</dbReference>
<dbReference type="GO" id="GO:0051539">
    <property type="term" value="F:4 iron, 4 sulfur cluster binding"/>
    <property type="evidence" value="ECO:0007669"/>
    <property type="project" value="UniProtKB-UniRule"/>
</dbReference>
<dbReference type="GO" id="GO:0035599">
    <property type="term" value="F:aspartic acid methylthiotransferase activity"/>
    <property type="evidence" value="ECO:0007669"/>
    <property type="project" value="TreeGrafter"/>
</dbReference>
<dbReference type="GO" id="GO:0046872">
    <property type="term" value="F:metal ion binding"/>
    <property type="evidence" value="ECO:0007669"/>
    <property type="project" value="UniProtKB-KW"/>
</dbReference>
<dbReference type="GO" id="GO:0103039">
    <property type="term" value="F:protein methylthiotransferase activity"/>
    <property type="evidence" value="ECO:0007669"/>
    <property type="project" value="UniProtKB-EC"/>
</dbReference>
<dbReference type="GO" id="GO:0006400">
    <property type="term" value="P:tRNA modification"/>
    <property type="evidence" value="ECO:0007669"/>
    <property type="project" value="InterPro"/>
</dbReference>
<dbReference type="CDD" id="cd01335">
    <property type="entry name" value="Radical_SAM"/>
    <property type="match status" value="1"/>
</dbReference>
<dbReference type="FunFam" id="2.40.50.140:FF:000060">
    <property type="entry name" value="Ribosomal protein S12 methylthiotransferase RimO"/>
    <property type="match status" value="1"/>
</dbReference>
<dbReference type="FunFam" id="3.40.50.12160:FF:000002">
    <property type="entry name" value="Ribosomal protein S12 methylthiotransferase RimO"/>
    <property type="match status" value="1"/>
</dbReference>
<dbReference type="FunFam" id="3.80.30.20:FF:000001">
    <property type="entry name" value="tRNA-2-methylthio-N(6)-dimethylallyladenosine synthase 2"/>
    <property type="match status" value="1"/>
</dbReference>
<dbReference type="Gene3D" id="3.40.50.12160">
    <property type="entry name" value="Methylthiotransferase, N-terminal domain"/>
    <property type="match status" value="1"/>
</dbReference>
<dbReference type="Gene3D" id="2.40.50.140">
    <property type="entry name" value="Nucleic acid-binding proteins"/>
    <property type="match status" value="1"/>
</dbReference>
<dbReference type="Gene3D" id="3.80.30.20">
    <property type="entry name" value="tm_1862 like domain"/>
    <property type="match status" value="1"/>
</dbReference>
<dbReference type="HAMAP" id="MF_01865">
    <property type="entry name" value="MTTase_RimO"/>
    <property type="match status" value="1"/>
</dbReference>
<dbReference type="InterPro" id="IPR006638">
    <property type="entry name" value="Elp3/MiaA/NifB-like_rSAM"/>
</dbReference>
<dbReference type="InterPro" id="IPR005839">
    <property type="entry name" value="Methylthiotransferase"/>
</dbReference>
<dbReference type="InterPro" id="IPR020612">
    <property type="entry name" value="Methylthiotransferase_CS"/>
</dbReference>
<dbReference type="InterPro" id="IPR013848">
    <property type="entry name" value="Methylthiotransferase_N"/>
</dbReference>
<dbReference type="InterPro" id="IPR038135">
    <property type="entry name" value="Methylthiotransferase_N_sf"/>
</dbReference>
<dbReference type="InterPro" id="IPR012340">
    <property type="entry name" value="NA-bd_OB-fold"/>
</dbReference>
<dbReference type="InterPro" id="IPR005840">
    <property type="entry name" value="Ribosomal_uS12_MeSTrfase_RimO"/>
</dbReference>
<dbReference type="InterPro" id="IPR007197">
    <property type="entry name" value="rSAM"/>
</dbReference>
<dbReference type="InterPro" id="IPR023404">
    <property type="entry name" value="rSAM_horseshoe"/>
</dbReference>
<dbReference type="InterPro" id="IPR002792">
    <property type="entry name" value="TRAM_dom"/>
</dbReference>
<dbReference type="NCBIfam" id="TIGR01125">
    <property type="entry name" value="30S ribosomal protein S12 methylthiotransferase RimO"/>
    <property type="match status" value="1"/>
</dbReference>
<dbReference type="NCBIfam" id="TIGR00089">
    <property type="entry name" value="MiaB/RimO family radical SAM methylthiotransferase"/>
    <property type="match status" value="1"/>
</dbReference>
<dbReference type="PANTHER" id="PTHR43837">
    <property type="entry name" value="RIBOSOMAL PROTEIN S12 METHYLTHIOTRANSFERASE RIMO"/>
    <property type="match status" value="1"/>
</dbReference>
<dbReference type="PANTHER" id="PTHR43837:SF1">
    <property type="entry name" value="RIBOSOMAL PROTEIN US12 METHYLTHIOTRANSFERASE RIMO"/>
    <property type="match status" value="1"/>
</dbReference>
<dbReference type="Pfam" id="PF04055">
    <property type="entry name" value="Radical_SAM"/>
    <property type="match status" value="1"/>
</dbReference>
<dbReference type="Pfam" id="PF18693">
    <property type="entry name" value="TRAM_2"/>
    <property type="match status" value="1"/>
</dbReference>
<dbReference type="Pfam" id="PF00919">
    <property type="entry name" value="UPF0004"/>
    <property type="match status" value="1"/>
</dbReference>
<dbReference type="SFLD" id="SFLDG01082">
    <property type="entry name" value="B12-binding_domain_containing"/>
    <property type="match status" value="1"/>
</dbReference>
<dbReference type="SFLD" id="SFLDG01061">
    <property type="entry name" value="methylthiotransferase"/>
    <property type="match status" value="1"/>
</dbReference>
<dbReference type="SFLD" id="SFLDF00274">
    <property type="entry name" value="ribosomal_protein_S12_methylth"/>
    <property type="match status" value="1"/>
</dbReference>
<dbReference type="SMART" id="SM00729">
    <property type="entry name" value="Elp3"/>
    <property type="match status" value="1"/>
</dbReference>
<dbReference type="SUPFAM" id="SSF102114">
    <property type="entry name" value="Radical SAM enzymes"/>
    <property type="match status" value="1"/>
</dbReference>
<dbReference type="PROSITE" id="PS51449">
    <property type="entry name" value="MTTASE_N"/>
    <property type="match status" value="1"/>
</dbReference>
<dbReference type="PROSITE" id="PS01278">
    <property type="entry name" value="MTTASE_RADICAL"/>
    <property type="match status" value="1"/>
</dbReference>
<dbReference type="PROSITE" id="PS51918">
    <property type="entry name" value="RADICAL_SAM"/>
    <property type="match status" value="1"/>
</dbReference>
<dbReference type="PROSITE" id="PS50926">
    <property type="entry name" value="TRAM"/>
    <property type="match status" value="1"/>
</dbReference>